<name>HEM1_CLOAB</name>
<proteinExistence type="inferred from homology"/>
<protein>
    <recommendedName>
        <fullName evidence="1">Glutamyl-tRNA reductase</fullName>
        <shortName evidence="1">GluTR</shortName>
        <ecNumber evidence="1">1.2.1.70</ecNumber>
    </recommendedName>
</protein>
<dbReference type="EC" id="1.2.1.70" evidence="1"/>
<dbReference type="EMBL" id="AE001437">
    <property type="protein sequence ID" value="AAK78080.1"/>
    <property type="molecule type" value="Genomic_DNA"/>
</dbReference>
<dbReference type="PIR" id="E96911">
    <property type="entry name" value="E96911"/>
</dbReference>
<dbReference type="RefSeq" id="NP_346740.1">
    <property type="nucleotide sequence ID" value="NC_003030.1"/>
</dbReference>
<dbReference type="RefSeq" id="WP_010963422.1">
    <property type="nucleotide sequence ID" value="NC_003030.1"/>
</dbReference>
<dbReference type="SMR" id="Q97MU6"/>
<dbReference type="STRING" id="272562.CA_C0095"/>
<dbReference type="GeneID" id="44996577"/>
<dbReference type="KEGG" id="cac:CA_C0095"/>
<dbReference type="PATRIC" id="fig|272562.8.peg.278"/>
<dbReference type="eggNOG" id="COG0373">
    <property type="taxonomic scope" value="Bacteria"/>
</dbReference>
<dbReference type="HOGENOM" id="CLU_035113_2_2_9"/>
<dbReference type="OrthoDB" id="110209at2"/>
<dbReference type="UniPathway" id="UPA00251">
    <property type="reaction ID" value="UER00316"/>
</dbReference>
<dbReference type="Proteomes" id="UP000000814">
    <property type="component" value="Chromosome"/>
</dbReference>
<dbReference type="GO" id="GO:0008883">
    <property type="term" value="F:glutamyl-tRNA reductase activity"/>
    <property type="evidence" value="ECO:0007669"/>
    <property type="project" value="UniProtKB-UniRule"/>
</dbReference>
<dbReference type="GO" id="GO:0050661">
    <property type="term" value="F:NADP binding"/>
    <property type="evidence" value="ECO:0007669"/>
    <property type="project" value="InterPro"/>
</dbReference>
<dbReference type="GO" id="GO:0019353">
    <property type="term" value="P:protoporphyrinogen IX biosynthetic process from glutamate"/>
    <property type="evidence" value="ECO:0007669"/>
    <property type="project" value="TreeGrafter"/>
</dbReference>
<dbReference type="FunFam" id="3.30.460.30:FF:000001">
    <property type="entry name" value="Glutamyl-tRNA reductase"/>
    <property type="match status" value="1"/>
</dbReference>
<dbReference type="Gene3D" id="3.30.460.30">
    <property type="entry name" value="Glutamyl-tRNA reductase, N-terminal domain"/>
    <property type="match status" value="1"/>
</dbReference>
<dbReference type="Gene3D" id="3.40.50.720">
    <property type="entry name" value="NAD(P)-binding Rossmann-like Domain"/>
    <property type="match status" value="1"/>
</dbReference>
<dbReference type="HAMAP" id="MF_00087">
    <property type="entry name" value="Glu_tRNA_reductase"/>
    <property type="match status" value="1"/>
</dbReference>
<dbReference type="InterPro" id="IPR000343">
    <property type="entry name" value="4pyrrol_synth_GluRdtase"/>
</dbReference>
<dbReference type="InterPro" id="IPR015896">
    <property type="entry name" value="4pyrrol_synth_GluRdtase_dimer"/>
</dbReference>
<dbReference type="InterPro" id="IPR015895">
    <property type="entry name" value="4pyrrol_synth_GluRdtase_N"/>
</dbReference>
<dbReference type="InterPro" id="IPR018214">
    <property type="entry name" value="GluRdtase_CS"/>
</dbReference>
<dbReference type="InterPro" id="IPR036343">
    <property type="entry name" value="GluRdtase_N_sf"/>
</dbReference>
<dbReference type="InterPro" id="IPR036291">
    <property type="entry name" value="NAD(P)-bd_dom_sf"/>
</dbReference>
<dbReference type="InterPro" id="IPR006151">
    <property type="entry name" value="Shikm_DH/Glu-tRNA_Rdtase"/>
</dbReference>
<dbReference type="NCBIfam" id="TIGR01035">
    <property type="entry name" value="hemA"/>
    <property type="match status" value="1"/>
</dbReference>
<dbReference type="PANTHER" id="PTHR43013">
    <property type="entry name" value="GLUTAMYL-TRNA REDUCTASE"/>
    <property type="match status" value="1"/>
</dbReference>
<dbReference type="PANTHER" id="PTHR43013:SF1">
    <property type="entry name" value="GLUTAMYL-TRNA REDUCTASE"/>
    <property type="match status" value="1"/>
</dbReference>
<dbReference type="Pfam" id="PF00745">
    <property type="entry name" value="GlutR_dimer"/>
    <property type="match status" value="1"/>
</dbReference>
<dbReference type="Pfam" id="PF05201">
    <property type="entry name" value="GlutR_N"/>
    <property type="match status" value="1"/>
</dbReference>
<dbReference type="Pfam" id="PF01488">
    <property type="entry name" value="Shikimate_DH"/>
    <property type="match status" value="1"/>
</dbReference>
<dbReference type="PIRSF" id="PIRSF000445">
    <property type="entry name" value="4pyrrol_synth_GluRdtase"/>
    <property type="match status" value="1"/>
</dbReference>
<dbReference type="SUPFAM" id="SSF69742">
    <property type="entry name" value="Glutamyl tRNA-reductase catalytic, N-terminal domain"/>
    <property type="match status" value="1"/>
</dbReference>
<dbReference type="SUPFAM" id="SSF51735">
    <property type="entry name" value="NAD(P)-binding Rossmann-fold domains"/>
    <property type="match status" value="1"/>
</dbReference>
<dbReference type="PROSITE" id="PS00747">
    <property type="entry name" value="GLUTR"/>
    <property type="match status" value="1"/>
</dbReference>
<keyword id="KW-0521">NADP</keyword>
<keyword id="KW-0560">Oxidoreductase</keyword>
<keyword id="KW-0627">Porphyrin biosynthesis</keyword>
<keyword id="KW-1185">Reference proteome</keyword>
<sequence>MIQLLALKRDLKVEIREKFSIIEKRIGDKDVLLKEVCNEVVILSTCNRIEIYFNSEKNRKQIIEEIFSKMGWNINFLENFFYCKGDEAINHLMEVACGFDSLILGEDQILGQIKAAYDTALKNKTSGSELKKLFQLVITCGKEFRSISMLNRIPVSSASIAVNKARQENLRRFMVFGFGDVGSLVCKYILSSDFDVLYIVVRNKAAVSIKDKRIKVLSFNEKNSYYDDVECMISCTSAPHPVIWEKELPYRKFTIFDLAVPRDVEETVYGRNNIDIYDIDQISMIDNNNRKKRKEIMMANRHIMSKYIVEFYDWQKVQEIVPDIIKLKLYGESVNKRRYETFKNKKATKDNDMLVNMLIKSTSNVYINRAIEVLKEEQLKGRGEDCLRILRRIFQK</sequence>
<comment type="function">
    <text evidence="1">Catalyzes the NADPH-dependent reduction of glutamyl-tRNA(Glu) to glutamate 1-semialdehyde (GSA).</text>
</comment>
<comment type="catalytic activity">
    <reaction evidence="1">
        <text>(S)-4-amino-5-oxopentanoate + tRNA(Glu) + NADP(+) = L-glutamyl-tRNA(Glu) + NADPH + H(+)</text>
        <dbReference type="Rhea" id="RHEA:12344"/>
        <dbReference type="Rhea" id="RHEA-COMP:9663"/>
        <dbReference type="Rhea" id="RHEA-COMP:9680"/>
        <dbReference type="ChEBI" id="CHEBI:15378"/>
        <dbReference type="ChEBI" id="CHEBI:57501"/>
        <dbReference type="ChEBI" id="CHEBI:57783"/>
        <dbReference type="ChEBI" id="CHEBI:58349"/>
        <dbReference type="ChEBI" id="CHEBI:78442"/>
        <dbReference type="ChEBI" id="CHEBI:78520"/>
        <dbReference type="EC" id="1.2.1.70"/>
    </reaction>
</comment>
<comment type="pathway">
    <text evidence="1">Porphyrin-containing compound metabolism; protoporphyrin-IX biosynthesis; 5-aminolevulinate from L-glutamyl-tRNA(Glu): step 1/2.</text>
</comment>
<comment type="subunit">
    <text evidence="1">Homodimer.</text>
</comment>
<comment type="domain">
    <text evidence="1">Possesses an unusual extended V-shaped dimeric structure with each monomer consisting of three distinct domains arranged along a curved 'spinal' alpha-helix. The N-terminal catalytic domain specifically recognizes the glutamate moiety of the substrate. The second domain is the NADPH-binding domain, and the third C-terminal domain is responsible for dimerization.</text>
</comment>
<comment type="miscellaneous">
    <text evidence="1">During catalysis, the active site Cys acts as a nucleophile attacking the alpha-carbonyl group of tRNA-bound glutamate with the formation of a thioester intermediate between enzyme and glutamate, and the concomitant release of tRNA(Glu). The thioester intermediate is finally reduced by direct hydride transfer from NADPH, to form the product GSA.</text>
</comment>
<comment type="similarity">
    <text evidence="1">Belongs to the glutamyl-tRNA reductase family.</text>
</comment>
<reference key="1">
    <citation type="journal article" date="2001" name="J. Bacteriol.">
        <title>Genome sequence and comparative analysis of the solvent-producing bacterium Clostridium acetobutylicum.</title>
        <authorList>
            <person name="Noelling J."/>
            <person name="Breton G."/>
            <person name="Omelchenko M.V."/>
            <person name="Makarova K.S."/>
            <person name="Zeng Q."/>
            <person name="Gibson R."/>
            <person name="Lee H.M."/>
            <person name="Dubois J."/>
            <person name="Qiu D."/>
            <person name="Hitti J."/>
            <person name="Wolf Y.I."/>
            <person name="Tatusov R.L."/>
            <person name="Sabathe F."/>
            <person name="Doucette-Stamm L.A."/>
            <person name="Soucaille P."/>
            <person name="Daly M.J."/>
            <person name="Bennett G.N."/>
            <person name="Koonin E.V."/>
            <person name="Smith D.R."/>
        </authorList>
    </citation>
    <scope>NUCLEOTIDE SEQUENCE [LARGE SCALE GENOMIC DNA]</scope>
    <source>
        <strain>ATCC 824 / DSM 792 / JCM 1419 / IAM 19013 / LMG 5710 / NBRC 13948 / NRRL B-527 / VKM B-1787 / 2291 / W</strain>
    </source>
</reference>
<evidence type="ECO:0000255" key="1">
    <source>
        <dbReference type="HAMAP-Rule" id="MF_00087"/>
    </source>
</evidence>
<organism>
    <name type="scientific">Clostridium acetobutylicum (strain ATCC 824 / DSM 792 / JCM 1419 / IAM 19013 / LMG 5710 / NBRC 13948 / NRRL B-527 / VKM B-1787 / 2291 / W)</name>
    <dbReference type="NCBI Taxonomy" id="272562"/>
    <lineage>
        <taxon>Bacteria</taxon>
        <taxon>Bacillati</taxon>
        <taxon>Bacillota</taxon>
        <taxon>Clostridia</taxon>
        <taxon>Eubacteriales</taxon>
        <taxon>Clostridiaceae</taxon>
        <taxon>Clostridium</taxon>
    </lineage>
</organism>
<feature type="chain" id="PRO_0000114011" description="Glutamyl-tRNA reductase">
    <location>
        <begin position="1"/>
        <end position="396"/>
    </location>
</feature>
<feature type="active site" description="Nucleophile" evidence="1">
    <location>
        <position position="46"/>
    </location>
</feature>
<feature type="binding site" evidence="1">
    <location>
        <begin position="45"/>
        <end position="48"/>
    </location>
    <ligand>
        <name>substrate</name>
    </ligand>
</feature>
<feature type="binding site" evidence="1">
    <location>
        <position position="101"/>
    </location>
    <ligand>
        <name>substrate</name>
    </ligand>
</feature>
<feature type="binding site" evidence="1">
    <location>
        <begin position="106"/>
        <end position="108"/>
    </location>
    <ligand>
        <name>substrate</name>
    </ligand>
</feature>
<feature type="binding site" evidence="1">
    <location>
        <position position="112"/>
    </location>
    <ligand>
        <name>substrate</name>
    </ligand>
</feature>
<feature type="binding site" evidence="1">
    <location>
        <begin position="177"/>
        <end position="182"/>
    </location>
    <ligand>
        <name>NADP(+)</name>
        <dbReference type="ChEBI" id="CHEBI:58349"/>
    </ligand>
</feature>
<feature type="site" description="Important for activity" evidence="1">
    <location>
        <position position="91"/>
    </location>
</feature>
<accession>Q97MU6</accession>
<gene>
    <name evidence="1" type="primary">hemA</name>
    <name type="ordered locus">CA_C0095</name>
</gene>